<reference key="1">
    <citation type="journal article" date="2000" name="Nature">
        <title>Complete genome sequence of Pseudomonas aeruginosa PAO1, an opportunistic pathogen.</title>
        <authorList>
            <person name="Stover C.K."/>
            <person name="Pham X.-Q.T."/>
            <person name="Erwin A.L."/>
            <person name="Mizoguchi S.D."/>
            <person name="Warrener P."/>
            <person name="Hickey M.J."/>
            <person name="Brinkman F.S.L."/>
            <person name="Hufnagle W.O."/>
            <person name="Kowalik D.J."/>
            <person name="Lagrou M."/>
            <person name="Garber R.L."/>
            <person name="Goltry L."/>
            <person name="Tolentino E."/>
            <person name="Westbrock-Wadman S."/>
            <person name="Yuan Y."/>
            <person name="Brody L.L."/>
            <person name="Coulter S.N."/>
            <person name="Folger K.R."/>
            <person name="Kas A."/>
            <person name="Larbig K."/>
            <person name="Lim R.M."/>
            <person name="Smith K.A."/>
            <person name="Spencer D.H."/>
            <person name="Wong G.K.-S."/>
            <person name="Wu Z."/>
            <person name="Paulsen I.T."/>
            <person name="Reizer J."/>
            <person name="Saier M.H. Jr."/>
            <person name="Hancock R.E.W."/>
            <person name="Lory S."/>
            <person name="Olson M.V."/>
        </authorList>
    </citation>
    <scope>NUCLEOTIDE SEQUENCE [LARGE SCALE GENOMIC DNA]</scope>
    <source>
        <strain>ATCC 15692 / DSM 22644 / CIP 104116 / JCM 14847 / LMG 12228 / 1C / PRS 101 / PAO1</strain>
    </source>
</reference>
<accession>Q9HUC6</accession>
<organism>
    <name type="scientific">Pseudomonas aeruginosa (strain ATCC 15692 / DSM 22644 / CIP 104116 / JCM 14847 / LMG 12228 / 1C / PRS 101 / PAO1)</name>
    <dbReference type="NCBI Taxonomy" id="208964"/>
    <lineage>
        <taxon>Bacteria</taxon>
        <taxon>Pseudomonadati</taxon>
        <taxon>Pseudomonadota</taxon>
        <taxon>Gammaproteobacteria</taxon>
        <taxon>Pseudomonadales</taxon>
        <taxon>Pseudomonadaceae</taxon>
        <taxon>Pseudomonas</taxon>
    </lineage>
</organism>
<keyword id="KW-0021">Allosteric enzyme</keyword>
<keyword id="KW-0963">Cytoplasm</keyword>
<keyword id="KW-0378">Hydrolase</keyword>
<keyword id="KW-0479">Metal-binding</keyword>
<keyword id="KW-0645">Protease</keyword>
<keyword id="KW-1185">Reference proteome</keyword>
<keyword id="KW-0915">Sodium</keyword>
<keyword id="KW-0888">Threonine protease</keyword>
<proteinExistence type="inferred from homology"/>
<name>HSLV_PSEAE</name>
<sequence>MTTIVSVRRNGKVVMGGDGQVSLGNTVMKGNAKKVRRLYHGQVLAGFAGATADAFTLFERFEQQLEKHQGHLVRAAVELAKDWRTDRSLSRLEAMLAVANKDASLIITGNGDVVEPEHGLIAMGSGGGFAQAAALALLQHNAELSAREVAETALNIAGSICVFTNQNLTIEELDSAV</sequence>
<feature type="initiator methionine" description="Removed" evidence="1">
    <location>
        <position position="1"/>
    </location>
</feature>
<feature type="chain" id="PRO_0000148132" description="ATP-dependent protease subunit HslV">
    <location>
        <begin position="2"/>
        <end position="177"/>
    </location>
</feature>
<feature type="active site" evidence="2">
    <location>
        <position position="2"/>
    </location>
</feature>
<feature type="binding site" evidence="2">
    <location>
        <position position="158"/>
    </location>
    <ligand>
        <name>Na(+)</name>
        <dbReference type="ChEBI" id="CHEBI:29101"/>
    </ligand>
</feature>
<feature type="binding site" evidence="2">
    <location>
        <position position="161"/>
    </location>
    <ligand>
        <name>Na(+)</name>
        <dbReference type="ChEBI" id="CHEBI:29101"/>
    </ligand>
</feature>
<feature type="binding site" evidence="2">
    <location>
        <position position="164"/>
    </location>
    <ligand>
        <name>Na(+)</name>
        <dbReference type="ChEBI" id="CHEBI:29101"/>
    </ligand>
</feature>
<protein>
    <recommendedName>
        <fullName evidence="2">ATP-dependent protease subunit HslV</fullName>
        <ecNumber evidence="2">3.4.25.2</ecNumber>
    </recommendedName>
</protein>
<dbReference type="EC" id="3.4.25.2" evidence="2"/>
<dbReference type="EMBL" id="AE004091">
    <property type="protein sequence ID" value="AAG08438.1"/>
    <property type="molecule type" value="Genomic_DNA"/>
</dbReference>
<dbReference type="PIR" id="D83015">
    <property type="entry name" value="D83015"/>
</dbReference>
<dbReference type="RefSeq" id="NP_253740.1">
    <property type="nucleotide sequence ID" value="NC_002516.2"/>
</dbReference>
<dbReference type="RefSeq" id="WP_003095852.1">
    <property type="nucleotide sequence ID" value="NZ_QZGE01000002.1"/>
</dbReference>
<dbReference type="SMR" id="Q9HUC6"/>
<dbReference type="FunCoup" id="Q9HUC6">
    <property type="interactions" value="464"/>
</dbReference>
<dbReference type="STRING" id="208964.PA5053"/>
<dbReference type="MEROPS" id="T01.006"/>
<dbReference type="PaxDb" id="208964-PA5053"/>
<dbReference type="DNASU" id="881049"/>
<dbReference type="GeneID" id="77223590"/>
<dbReference type="GeneID" id="881049"/>
<dbReference type="KEGG" id="pae:PA5053"/>
<dbReference type="PATRIC" id="fig|208964.12.peg.5297"/>
<dbReference type="PseudoCAP" id="PA5053"/>
<dbReference type="HOGENOM" id="CLU_093872_1_0_6"/>
<dbReference type="InParanoid" id="Q9HUC6"/>
<dbReference type="OrthoDB" id="9804884at2"/>
<dbReference type="PhylomeDB" id="Q9HUC6"/>
<dbReference type="BioCyc" id="PAER208964:G1FZ6-5169-MONOMER"/>
<dbReference type="Proteomes" id="UP000002438">
    <property type="component" value="Chromosome"/>
</dbReference>
<dbReference type="GO" id="GO:0005737">
    <property type="term" value="C:cytoplasm"/>
    <property type="evidence" value="ECO:0000318"/>
    <property type="project" value="GO_Central"/>
</dbReference>
<dbReference type="GO" id="GO:0009376">
    <property type="term" value="C:HslUV protease complex"/>
    <property type="evidence" value="ECO:0007669"/>
    <property type="project" value="UniProtKB-UniRule"/>
</dbReference>
<dbReference type="GO" id="GO:0005839">
    <property type="term" value="C:proteasome core complex"/>
    <property type="evidence" value="ECO:0007669"/>
    <property type="project" value="InterPro"/>
</dbReference>
<dbReference type="GO" id="GO:0046872">
    <property type="term" value="F:metal ion binding"/>
    <property type="evidence" value="ECO:0007669"/>
    <property type="project" value="UniProtKB-KW"/>
</dbReference>
<dbReference type="GO" id="GO:0004298">
    <property type="term" value="F:threonine-type endopeptidase activity"/>
    <property type="evidence" value="ECO:0007669"/>
    <property type="project" value="UniProtKB-KW"/>
</dbReference>
<dbReference type="GO" id="GO:0051603">
    <property type="term" value="P:proteolysis involved in protein catabolic process"/>
    <property type="evidence" value="ECO:0000318"/>
    <property type="project" value="GO_Central"/>
</dbReference>
<dbReference type="CDD" id="cd01913">
    <property type="entry name" value="protease_HslV"/>
    <property type="match status" value="1"/>
</dbReference>
<dbReference type="FunFam" id="3.60.20.10:FF:000002">
    <property type="entry name" value="ATP-dependent protease subunit HslV"/>
    <property type="match status" value="1"/>
</dbReference>
<dbReference type="Gene3D" id="3.60.20.10">
    <property type="entry name" value="Glutamine Phosphoribosylpyrophosphate, subunit 1, domain 1"/>
    <property type="match status" value="1"/>
</dbReference>
<dbReference type="HAMAP" id="MF_00248">
    <property type="entry name" value="HslV"/>
    <property type="match status" value="1"/>
</dbReference>
<dbReference type="InterPro" id="IPR022281">
    <property type="entry name" value="ATP-dep_Prtase_HsIV_su"/>
</dbReference>
<dbReference type="InterPro" id="IPR029055">
    <property type="entry name" value="Ntn_hydrolases_N"/>
</dbReference>
<dbReference type="InterPro" id="IPR001353">
    <property type="entry name" value="Proteasome_sua/b"/>
</dbReference>
<dbReference type="InterPro" id="IPR023333">
    <property type="entry name" value="Proteasome_suB-type"/>
</dbReference>
<dbReference type="NCBIfam" id="TIGR03692">
    <property type="entry name" value="ATP_dep_HslV"/>
    <property type="match status" value="1"/>
</dbReference>
<dbReference type="NCBIfam" id="NF003964">
    <property type="entry name" value="PRK05456.1"/>
    <property type="match status" value="1"/>
</dbReference>
<dbReference type="PANTHER" id="PTHR32194:SF0">
    <property type="entry name" value="ATP-DEPENDENT PROTEASE SUBUNIT HSLV"/>
    <property type="match status" value="1"/>
</dbReference>
<dbReference type="PANTHER" id="PTHR32194">
    <property type="entry name" value="METALLOPROTEASE TLDD"/>
    <property type="match status" value="1"/>
</dbReference>
<dbReference type="Pfam" id="PF00227">
    <property type="entry name" value="Proteasome"/>
    <property type="match status" value="1"/>
</dbReference>
<dbReference type="PIRSF" id="PIRSF039093">
    <property type="entry name" value="HslV"/>
    <property type="match status" value="1"/>
</dbReference>
<dbReference type="SUPFAM" id="SSF56235">
    <property type="entry name" value="N-terminal nucleophile aminohydrolases (Ntn hydrolases)"/>
    <property type="match status" value="1"/>
</dbReference>
<dbReference type="PROSITE" id="PS51476">
    <property type="entry name" value="PROTEASOME_BETA_2"/>
    <property type="match status" value="1"/>
</dbReference>
<evidence type="ECO:0000250" key="1"/>
<evidence type="ECO:0000255" key="2">
    <source>
        <dbReference type="HAMAP-Rule" id="MF_00248"/>
    </source>
</evidence>
<comment type="function">
    <text evidence="2">Protease subunit of a proteasome-like degradation complex believed to be a general protein degrading machinery.</text>
</comment>
<comment type="catalytic activity">
    <reaction evidence="2">
        <text>ATP-dependent cleavage of peptide bonds with broad specificity.</text>
        <dbReference type="EC" id="3.4.25.2"/>
    </reaction>
</comment>
<comment type="activity regulation">
    <text evidence="2">Allosterically activated by HslU binding.</text>
</comment>
<comment type="subunit">
    <text evidence="2">A double ring-shaped homohexamer of HslV is capped on each side by a ring-shaped HslU homohexamer. The assembly of the HslU/HslV complex is dependent on binding of ATP.</text>
</comment>
<comment type="subcellular location">
    <subcellularLocation>
        <location evidence="2">Cytoplasm</location>
    </subcellularLocation>
</comment>
<comment type="similarity">
    <text evidence="2">Belongs to the peptidase T1B family. HslV subfamily.</text>
</comment>
<gene>
    <name evidence="2" type="primary">hslV</name>
    <name type="ordered locus">PA5053</name>
</gene>